<organism>
    <name type="scientific">Stenotrophomonas maltophilia (strain R551-3)</name>
    <dbReference type="NCBI Taxonomy" id="391008"/>
    <lineage>
        <taxon>Bacteria</taxon>
        <taxon>Pseudomonadati</taxon>
        <taxon>Pseudomonadota</taxon>
        <taxon>Gammaproteobacteria</taxon>
        <taxon>Lysobacterales</taxon>
        <taxon>Lysobacteraceae</taxon>
        <taxon>Stenotrophomonas</taxon>
        <taxon>Stenotrophomonas maltophilia group</taxon>
    </lineage>
</organism>
<evidence type="ECO:0000255" key="1">
    <source>
        <dbReference type="HAMAP-Rule" id="MF_00168"/>
    </source>
</evidence>
<keyword id="KW-0328">Glycosyltransferase</keyword>
<keyword id="KW-0479">Metal-binding</keyword>
<keyword id="KW-0671">Queuosine biosynthesis</keyword>
<keyword id="KW-0808">Transferase</keyword>
<keyword id="KW-0819">tRNA processing</keyword>
<keyword id="KW-0862">Zinc</keyword>
<accession>B4SSS1</accession>
<feature type="chain" id="PRO_1000097566" description="Queuine tRNA-ribosyltransferase">
    <location>
        <begin position="1"/>
        <end position="376"/>
    </location>
</feature>
<feature type="region of interest" description="RNA binding" evidence="1">
    <location>
        <begin position="248"/>
        <end position="254"/>
    </location>
</feature>
<feature type="region of interest" description="RNA binding; important for wobble base 34 recognition" evidence="1">
    <location>
        <begin position="272"/>
        <end position="276"/>
    </location>
</feature>
<feature type="active site" description="Proton acceptor" evidence="1">
    <location>
        <position position="92"/>
    </location>
</feature>
<feature type="active site" description="Nucleophile" evidence="1">
    <location>
        <position position="267"/>
    </location>
</feature>
<feature type="binding site" evidence="1">
    <location>
        <begin position="92"/>
        <end position="96"/>
    </location>
    <ligand>
        <name>substrate</name>
    </ligand>
</feature>
<feature type="binding site" evidence="1">
    <location>
        <position position="146"/>
    </location>
    <ligand>
        <name>substrate</name>
    </ligand>
</feature>
<feature type="binding site" evidence="1">
    <location>
        <position position="190"/>
    </location>
    <ligand>
        <name>substrate</name>
    </ligand>
</feature>
<feature type="binding site" evidence="1">
    <location>
        <position position="217"/>
    </location>
    <ligand>
        <name>substrate</name>
    </ligand>
</feature>
<feature type="binding site" evidence="1">
    <location>
        <position position="305"/>
    </location>
    <ligand>
        <name>Zn(2+)</name>
        <dbReference type="ChEBI" id="CHEBI:29105"/>
    </ligand>
</feature>
<feature type="binding site" evidence="1">
    <location>
        <position position="307"/>
    </location>
    <ligand>
        <name>Zn(2+)</name>
        <dbReference type="ChEBI" id="CHEBI:29105"/>
    </ligand>
</feature>
<feature type="binding site" evidence="1">
    <location>
        <position position="310"/>
    </location>
    <ligand>
        <name>Zn(2+)</name>
        <dbReference type="ChEBI" id="CHEBI:29105"/>
    </ligand>
</feature>
<feature type="binding site" evidence="1">
    <location>
        <position position="337"/>
    </location>
    <ligand>
        <name>Zn(2+)</name>
        <dbReference type="ChEBI" id="CHEBI:29105"/>
    </ligand>
</feature>
<sequence>MSRLQFQLQTRDGRARRGRLTFPRGTVETPAFMPVGTYGSVKGILPDQVRALGAEIILGNTFHLYLRPGLDIIADHGGLHGFCRWDGPILTDSGGFQVFSLAHRRKITEQGVTFASPTDGARVFLGPEESMKIQKVLDSDVVMIFDECTPYPATEDVARRSMELSLRWAQRSRNAHDELGNDAALFGIVQGGVHTDLRSRSADALQAIGFDGYAIGGLAVGEPEDERNAMLDHLDPELPADRPRYLMGVGRPEDLVEGVARGVDMFDCVMPTRNARNGHYFTSFGTVRIRNSQYARDMDPIEPGCGCVACTGGYTRSYLRHLDRCNEMLAPMLGTLHNLFYYEKLMADIRAAIEAGTFLAFRESFYAARGAVAPPL</sequence>
<dbReference type="EC" id="2.4.2.29" evidence="1"/>
<dbReference type="EMBL" id="CP001111">
    <property type="protein sequence ID" value="ACF51320.1"/>
    <property type="molecule type" value="Genomic_DNA"/>
</dbReference>
<dbReference type="RefSeq" id="WP_012510768.1">
    <property type="nucleotide sequence ID" value="NC_011071.1"/>
</dbReference>
<dbReference type="SMR" id="B4SSS1"/>
<dbReference type="STRING" id="391008.Smal_1615"/>
<dbReference type="KEGG" id="smt:Smal_1615"/>
<dbReference type="eggNOG" id="COG0343">
    <property type="taxonomic scope" value="Bacteria"/>
</dbReference>
<dbReference type="HOGENOM" id="CLU_022060_0_1_6"/>
<dbReference type="OrthoDB" id="9805417at2"/>
<dbReference type="UniPathway" id="UPA00392"/>
<dbReference type="Proteomes" id="UP000001867">
    <property type="component" value="Chromosome"/>
</dbReference>
<dbReference type="GO" id="GO:0005829">
    <property type="term" value="C:cytosol"/>
    <property type="evidence" value="ECO:0007669"/>
    <property type="project" value="TreeGrafter"/>
</dbReference>
<dbReference type="GO" id="GO:0046872">
    <property type="term" value="F:metal ion binding"/>
    <property type="evidence" value="ECO:0007669"/>
    <property type="project" value="UniProtKB-KW"/>
</dbReference>
<dbReference type="GO" id="GO:0008479">
    <property type="term" value="F:tRNA-guanosine(34) queuine transglycosylase activity"/>
    <property type="evidence" value="ECO:0007669"/>
    <property type="project" value="UniProtKB-UniRule"/>
</dbReference>
<dbReference type="GO" id="GO:0008616">
    <property type="term" value="P:queuosine biosynthetic process"/>
    <property type="evidence" value="ECO:0007669"/>
    <property type="project" value="UniProtKB-UniRule"/>
</dbReference>
<dbReference type="GO" id="GO:0002099">
    <property type="term" value="P:tRNA wobble guanine modification"/>
    <property type="evidence" value="ECO:0007669"/>
    <property type="project" value="TreeGrafter"/>
</dbReference>
<dbReference type="GO" id="GO:0101030">
    <property type="term" value="P:tRNA-guanine transglycosylation"/>
    <property type="evidence" value="ECO:0007669"/>
    <property type="project" value="InterPro"/>
</dbReference>
<dbReference type="FunFam" id="3.20.20.105:FF:000001">
    <property type="entry name" value="Queuine tRNA-ribosyltransferase"/>
    <property type="match status" value="1"/>
</dbReference>
<dbReference type="Gene3D" id="3.20.20.105">
    <property type="entry name" value="Queuine tRNA-ribosyltransferase-like"/>
    <property type="match status" value="1"/>
</dbReference>
<dbReference type="HAMAP" id="MF_00168">
    <property type="entry name" value="Q_tRNA_Tgt"/>
    <property type="match status" value="1"/>
</dbReference>
<dbReference type="InterPro" id="IPR050076">
    <property type="entry name" value="ArchSynthase1/Queuine_TRR"/>
</dbReference>
<dbReference type="InterPro" id="IPR004803">
    <property type="entry name" value="TGT"/>
</dbReference>
<dbReference type="InterPro" id="IPR036511">
    <property type="entry name" value="TGT-like_sf"/>
</dbReference>
<dbReference type="InterPro" id="IPR002616">
    <property type="entry name" value="tRNA_ribo_trans-like"/>
</dbReference>
<dbReference type="NCBIfam" id="TIGR00430">
    <property type="entry name" value="Q_tRNA_tgt"/>
    <property type="match status" value="1"/>
</dbReference>
<dbReference type="NCBIfam" id="TIGR00449">
    <property type="entry name" value="tgt_general"/>
    <property type="match status" value="1"/>
</dbReference>
<dbReference type="PANTHER" id="PTHR46499">
    <property type="entry name" value="QUEUINE TRNA-RIBOSYLTRANSFERASE"/>
    <property type="match status" value="1"/>
</dbReference>
<dbReference type="PANTHER" id="PTHR46499:SF1">
    <property type="entry name" value="QUEUINE TRNA-RIBOSYLTRANSFERASE"/>
    <property type="match status" value="1"/>
</dbReference>
<dbReference type="Pfam" id="PF01702">
    <property type="entry name" value="TGT"/>
    <property type="match status" value="1"/>
</dbReference>
<dbReference type="SUPFAM" id="SSF51713">
    <property type="entry name" value="tRNA-guanine transglycosylase"/>
    <property type="match status" value="1"/>
</dbReference>
<proteinExistence type="inferred from homology"/>
<protein>
    <recommendedName>
        <fullName evidence="1">Queuine tRNA-ribosyltransferase</fullName>
        <ecNumber evidence="1">2.4.2.29</ecNumber>
    </recommendedName>
    <alternativeName>
        <fullName evidence="1">Guanine insertion enzyme</fullName>
    </alternativeName>
    <alternativeName>
        <fullName evidence="1">tRNA-guanine transglycosylase</fullName>
    </alternativeName>
</protein>
<comment type="function">
    <text evidence="1">Catalyzes the base-exchange of a guanine (G) residue with the queuine precursor 7-aminomethyl-7-deazaguanine (PreQ1) at position 34 (anticodon wobble position) in tRNAs with GU(N) anticodons (tRNA-Asp, -Asn, -His and -Tyr). Catalysis occurs through a double-displacement mechanism. The nucleophile active site attacks the C1' of nucleotide 34 to detach the guanine base from the RNA, forming a covalent enzyme-RNA intermediate. The proton acceptor active site deprotonates the incoming PreQ1, allowing a nucleophilic attack on the C1' of the ribose to form the product. After dissociation, two additional enzymatic reactions on the tRNA convert PreQ1 to queuine (Q), resulting in the hypermodified nucleoside queuosine (7-(((4,5-cis-dihydroxy-2-cyclopenten-1-yl)amino)methyl)-7-deazaguanosine).</text>
</comment>
<comment type="catalytic activity">
    <reaction evidence="1">
        <text>7-aminomethyl-7-carbaguanine + guanosine(34) in tRNA = 7-aminomethyl-7-carbaguanosine(34) in tRNA + guanine</text>
        <dbReference type="Rhea" id="RHEA:24104"/>
        <dbReference type="Rhea" id="RHEA-COMP:10341"/>
        <dbReference type="Rhea" id="RHEA-COMP:10342"/>
        <dbReference type="ChEBI" id="CHEBI:16235"/>
        <dbReference type="ChEBI" id="CHEBI:58703"/>
        <dbReference type="ChEBI" id="CHEBI:74269"/>
        <dbReference type="ChEBI" id="CHEBI:82833"/>
        <dbReference type="EC" id="2.4.2.29"/>
    </reaction>
</comment>
<comment type="cofactor">
    <cofactor evidence="1">
        <name>Zn(2+)</name>
        <dbReference type="ChEBI" id="CHEBI:29105"/>
    </cofactor>
    <text evidence="1">Binds 1 zinc ion per subunit.</text>
</comment>
<comment type="pathway">
    <text evidence="1">tRNA modification; tRNA-queuosine biosynthesis.</text>
</comment>
<comment type="subunit">
    <text evidence="1">Homodimer. Within each dimer, one monomer is responsible for RNA recognition and catalysis, while the other monomer binds to the replacement base PreQ1.</text>
</comment>
<comment type="similarity">
    <text evidence="1">Belongs to the queuine tRNA-ribosyltransferase family.</text>
</comment>
<name>TGT_STRM5</name>
<gene>
    <name evidence="1" type="primary">tgt</name>
    <name type="ordered locus">Smal_1615</name>
</gene>
<reference key="1">
    <citation type="submission" date="2008-06" db="EMBL/GenBank/DDBJ databases">
        <title>Complete sequence of Stenotrophomonas maltophilia R551-3.</title>
        <authorList>
            <consortium name="US DOE Joint Genome Institute"/>
            <person name="Lucas S."/>
            <person name="Copeland A."/>
            <person name="Lapidus A."/>
            <person name="Glavina del Rio T."/>
            <person name="Dalin E."/>
            <person name="Tice H."/>
            <person name="Pitluck S."/>
            <person name="Chain P."/>
            <person name="Malfatti S."/>
            <person name="Shin M."/>
            <person name="Vergez L."/>
            <person name="Lang D."/>
            <person name="Schmutz J."/>
            <person name="Larimer F."/>
            <person name="Land M."/>
            <person name="Hauser L."/>
            <person name="Kyrpides N."/>
            <person name="Mikhailova N."/>
            <person name="Taghavi S."/>
            <person name="Monchy S."/>
            <person name="Newman L."/>
            <person name="Vangronsveld J."/>
            <person name="van der Lelie D."/>
            <person name="Richardson P."/>
        </authorList>
    </citation>
    <scope>NUCLEOTIDE SEQUENCE [LARGE SCALE GENOMIC DNA]</scope>
    <source>
        <strain>R551-3</strain>
    </source>
</reference>